<proteinExistence type="evidence at protein level"/>
<accession>F4I2S4</accession>
<accession>Q8L8Y5</accession>
<accession>Q9S9N3</accession>
<keyword id="KW-0025">Alternative splicing</keyword>
<keyword id="KW-0967">Endosome</keyword>
<keyword id="KW-0344">Guanine-nucleotide releasing factor</keyword>
<keyword id="KW-1185">Reference proteome</keyword>
<evidence type="ECO:0000269" key="1">
    <source>
    </source>
</evidence>
<evidence type="ECO:0000303" key="2">
    <source>
    </source>
</evidence>
<evidence type="ECO:0000305" key="3"/>
<evidence type="ECO:0000312" key="4">
    <source>
        <dbReference type="Araport" id="AT1G16020"/>
    </source>
</evidence>
<evidence type="ECO:0000312" key="5">
    <source>
        <dbReference type="EMBL" id="AAF18499.1"/>
    </source>
</evidence>
<feature type="chain" id="PRO_0000438481" description="Vacuolar fusion protein CCZ1 homolog A">
    <location>
        <begin position="1"/>
        <end position="515"/>
    </location>
</feature>
<feature type="splice variant" id="VSP_058666" description="In isoform 2.">
    <original>TFQIWSLSEDCCCE</original>
    <variation>K</variation>
    <location>
        <begin position="152"/>
        <end position="165"/>
    </location>
</feature>
<feature type="sequence conflict" description="In Ref. 4; BT012033." evidence="3" ref="4">
    <original>E</original>
    <variation>G</variation>
    <location>
        <position position="93"/>
    </location>
</feature>
<feature type="sequence conflict" description="In Ref. 3; AAM67052." evidence="3" ref="3">
    <original>L</original>
    <variation>F</variation>
    <location>
        <position position="252"/>
    </location>
</feature>
<protein>
    <recommendedName>
        <fullName evidence="3">Vacuolar fusion protein CCZ1 homolog A</fullName>
    </recommendedName>
</protein>
<comment type="function">
    <text evidence="1">Plays an important role in membrane trafficking through the secretory apparatus. In complex with MON1, acts as a guanine exchange factor (GEF) for RABG3F of the Rab7 protein family. Promotes the exchange of GDP to GTP, converting RABG3F from an inactive GDP-bound form into an active GTP-bound form. The RABG3F active form is involved in protein trafficking from prevacuolar compartments (PVCs) to vacuoles. May serve as a linker between Rab5 and Rab7 protein families in PVCs and mediate PVC maturation.</text>
</comment>
<comment type="subunit">
    <text evidence="1">Interacts with MON1.</text>
</comment>
<comment type="subcellular location">
    <subcellularLocation>
        <location evidence="1">Endosome</location>
    </subcellularLocation>
    <subcellularLocation>
        <location evidence="1">Prevacuolar compartment</location>
    </subcellularLocation>
</comment>
<comment type="alternative products">
    <event type="alternative splicing"/>
    <isoform>
        <id>F4I2S4-1</id>
        <name>1</name>
        <sequence type="displayed"/>
    </isoform>
    <isoform>
        <id>F4I2S4-2</id>
        <name>2</name>
        <sequence type="described" ref="VSP_058666"/>
    </isoform>
</comment>
<comment type="similarity">
    <text evidence="3">Belongs to the CCZ1 family.</text>
</comment>
<organism>
    <name type="scientific">Arabidopsis thaliana</name>
    <name type="common">Mouse-ear cress</name>
    <dbReference type="NCBI Taxonomy" id="3702"/>
    <lineage>
        <taxon>Eukaryota</taxon>
        <taxon>Viridiplantae</taxon>
        <taxon>Streptophyta</taxon>
        <taxon>Embryophyta</taxon>
        <taxon>Tracheophyta</taxon>
        <taxon>Spermatophyta</taxon>
        <taxon>Magnoliopsida</taxon>
        <taxon>eudicotyledons</taxon>
        <taxon>Gunneridae</taxon>
        <taxon>Pentapetalae</taxon>
        <taxon>rosids</taxon>
        <taxon>malvids</taxon>
        <taxon>Brassicales</taxon>
        <taxon>Brassicaceae</taxon>
        <taxon>Camelineae</taxon>
        <taxon>Arabidopsis</taxon>
    </lineage>
</organism>
<dbReference type="EMBL" id="AC010924">
    <property type="protein sequence ID" value="AAF18499.1"/>
    <property type="molecule type" value="Genomic_DNA"/>
</dbReference>
<dbReference type="EMBL" id="CP002684">
    <property type="protein sequence ID" value="AEE29398.1"/>
    <property type="molecule type" value="Genomic_DNA"/>
</dbReference>
<dbReference type="EMBL" id="CP002684">
    <property type="protein sequence ID" value="AEE29399.1"/>
    <property type="molecule type" value="Genomic_DNA"/>
</dbReference>
<dbReference type="EMBL" id="AY088734">
    <property type="protein sequence ID" value="AAM67052.1"/>
    <property type="molecule type" value="mRNA"/>
</dbReference>
<dbReference type="EMBL" id="BT012033">
    <property type="status" value="NOT_ANNOTATED_CDS"/>
    <property type="molecule type" value="mRNA"/>
</dbReference>
<dbReference type="PIR" id="H86294">
    <property type="entry name" value="H86294"/>
</dbReference>
<dbReference type="RefSeq" id="NP_563989.1">
    <molecule id="F4I2S4-1"/>
    <property type="nucleotide sequence ID" value="NM_101470.3"/>
</dbReference>
<dbReference type="RefSeq" id="NP_849674.1">
    <molecule id="F4I2S4-2"/>
    <property type="nucleotide sequence ID" value="NM_179343.2"/>
</dbReference>
<dbReference type="SMR" id="F4I2S4"/>
<dbReference type="FunCoup" id="F4I2S4">
    <property type="interactions" value="3491"/>
</dbReference>
<dbReference type="STRING" id="3702.F4I2S4"/>
<dbReference type="iPTMnet" id="F4I2S4"/>
<dbReference type="PaxDb" id="3702-AT1G16020.1"/>
<dbReference type="ProteomicsDB" id="223876">
    <molecule id="F4I2S4-1"/>
</dbReference>
<dbReference type="DNASU" id="838172"/>
<dbReference type="EnsemblPlants" id="AT1G16020.1">
    <molecule id="F4I2S4-1"/>
    <property type="protein sequence ID" value="AT1G16020.1"/>
    <property type="gene ID" value="AT1G16020"/>
</dbReference>
<dbReference type="EnsemblPlants" id="AT1G16020.2">
    <molecule id="F4I2S4-2"/>
    <property type="protein sequence ID" value="AT1G16020.2"/>
    <property type="gene ID" value="AT1G16020"/>
</dbReference>
<dbReference type="GeneID" id="838172"/>
<dbReference type="Gramene" id="AT1G16020.1">
    <molecule id="F4I2S4-1"/>
    <property type="protein sequence ID" value="AT1G16020.1"/>
    <property type="gene ID" value="AT1G16020"/>
</dbReference>
<dbReference type="Gramene" id="AT1G16020.2">
    <molecule id="F4I2S4-2"/>
    <property type="protein sequence ID" value="AT1G16020.2"/>
    <property type="gene ID" value="AT1G16020"/>
</dbReference>
<dbReference type="KEGG" id="ath:AT1G16020"/>
<dbReference type="Araport" id="AT1G16020"/>
<dbReference type="TAIR" id="AT1G16020">
    <property type="gene designation" value="CCZ1A"/>
</dbReference>
<dbReference type="eggNOG" id="KOG2622">
    <property type="taxonomic scope" value="Eukaryota"/>
</dbReference>
<dbReference type="HOGENOM" id="CLU_037828_2_0_1"/>
<dbReference type="InParanoid" id="F4I2S4"/>
<dbReference type="OMA" id="ICRINGE"/>
<dbReference type="OrthoDB" id="240546at2759"/>
<dbReference type="PRO" id="PR:F4I2S4"/>
<dbReference type="Proteomes" id="UP000006548">
    <property type="component" value="Chromosome 1"/>
</dbReference>
<dbReference type="ExpressionAtlas" id="F4I2S4">
    <property type="expression patterns" value="baseline and differential"/>
</dbReference>
<dbReference type="GO" id="GO:0035658">
    <property type="term" value="C:Mon1-Ccz1 complex"/>
    <property type="evidence" value="ECO:0007669"/>
    <property type="project" value="InterPro"/>
</dbReference>
<dbReference type="GO" id="GO:0005085">
    <property type="term" value="F:guanyl-nucleotide exchange factor activity"/>
    <property type="evidence" value="ECO:0007669"/>
    <property type="project" value="UniProtKB-KW"/>
</dbReference>
<dbReference type="GO" id="GO:0016192">
    <property type="term" value="P:vesicle-mediated transport"/>
    <property type="evidence" value="ECO:0007669"/>
    <property type="project" value="InterPro"/>
</dbReference>
<dbReference type="InterPro" id="IPR013176">
    <property type="entry name" value="Ccz1"/>
</dbReference>
<dbReference type="InterPro" id="IPR043987">
    <property type="entry name" value="CCZ1/INTU/HSP4_longin_1"/>
</dbReference>
<dbReference type="PANTHER" id="PTHR13056:SF3">
    <property type="entry name" value="VACUOLAR FUSION PROTEIN CCZ1 HOMOLOG A"/>
    <property type="match status" value="1"/>
</dbReference>
<dbReference type="PANTHER" id="PTHR13056">
    <property type="entry name" value="VACUOLAR FUSION PROTEIN CCZ1 HOMOLOG-RELATED"/>
    <property type="match status" value="1"/>
</dbReference>
<dbReference type="Pfam" id="PF19031">
    <property type="entry name" value="Intu_longin_1"/>
    <property type="match status" value="1"/>
</dbReference>
<gene>
    <name evidence="2" type="primary">CCZ1A</name>
    <name evidence="4" type="ordered locus">At1g16020</name>
    <name evidence="5" type="ORF">T24D18.12</name>
</gene>
<sequence>MASMSSGDESLRLCMFDLRRGQTEGQELEKILFFYPADLDFSTQLSVIGLSEGLITFTRLFSPEAACEVIEAERHSHVFYEAEPDIWMVMVVEKNKETGAIWRIDALRRVLKEVHSLFVMFHGSIRALIEKEPTGGLTRSLLYPFITDYLSTFQIWSLSEDCCCEFFVGKKLQLPTFRETLRERGTVQMLTLARDTAVEVQSLVQVLDSCAGSLRCHSMILFQDLLVSTTLSADDTVDLFTFAVMRLTSKALSSDTSSWSYLRKGPGSSEISSRSNLAPVGSIDSLHSRNGNNMHHVIRPLQNDKWTKGKDGFLITDIWGLETGGSPDSAIPTIWLQQTQERMYLLAYQHKSLTLLLLMPTNAIVNGDLSISAVKQQVIEDASLRILKIEENISRGWGGENAYHIKGYRYLVVDNDTKVSRSSPSGKVTTLAKESLLALNKLREEVDSEKSRAKGQEKDMEICIRAKNNVWVIARVTRGKELYMALEKGSDTLLDTTDAVGRFSNRYCSGAFLMD</sequence>
<name>CCZ1A_ARATH</name>
<reference key="1">
    <citation type="journal article" date="2000" name="Nature">
        <title>Sequence and analysis of chromosome 1 of the plant Arabidopsis thaliana.</title>
        <authorList>
            <person name="Theologis A."/>
            <person name="Ecker J.R."/>
            <person name="Palm C.J."/>
            <person name="Federspiel N.A."/>
            <person name="Kaul S."/>
            <person name="White O."/>
            <person name="Alonso J."/>
            <person name="Altafi H."/>
            <person name="Araujo R."/>
            <person name="Bowman C.L."/>
            <person name="Brooks S.Y."/>
            <person name="Buehler E."/>
            <person name="Chan A."/>
            <person name="Chao Q."/>
            <person name="Chen H."/>
            <person name="Cheuk R.F."/>
            <person name="Chin C.W."/>
            <person name="Chung M.K."/>
            <person name="Conn L."/>
            <person name="Conway A.B."/>
            <person name="Conway A.R."/>
            <person name="Creasy T.H."/>
            <person name="Dewar K."/>
            <person name="Dunn P."/>
            <person name="Etgu P."/>
            <person name="Feldblyum T.V."/>
            <person name="Feng J.-D."/>
            <person name="Fong B."/>
            <person name="Fujii C.Y."/>
            <person name="Gill J.E."/>
            <person name="Goldsmith A.D."/>
            <person name="Haas B."/>
            <person name="Hansen N.F."/>
            <person name="Hughes B."/>
            <person name="Huizar L."/>
            <person name="Hunter J.L."/>
            <person name="Jenkins J."/>
            <person name="Johnson-Hopson C."/>
            <person name="Khan S."/>
            <person name="Khaykin E."/>
            <person name="Kim C.J."/>
            <person name="Koo H.L."/>
            <person name="Kremenetskaia I."/>
            <person name="Kurtz D.B."/>
            <person name="Kwan A."/>
            <person name="Lam B."/>
            <person name="Langin-Hooper S."/>
            <person name="Lee A."/>
            <person name="Lee J.M."/>
            <person name="Lenz C.A."/>
            <person name="Li J.H."/>
            <person name="Li Y.-P."/>
            <person name="Lin X."/>
            <person name="Liu S.X."/>
            <person name="Liu Z.A."/>
            <person name="Luros J.S."/>
            <person name="Maiti R."/>
            <person name="Marziali A."/>
            <person name="Militscher J."/>
            <person name="Miranda M."/>
            <person name="Nguyen M."/>
            <person name="Nierman W.C."/>
            <person name="Osborne B.I."/>
            <person name="Pai G."/>
            <person name="Peterson J."/>
            <person name="Pham P.K."/>
            <person name="Rizzo M."/>
            <person name="Rooney T."/>
            <person name="Rowley D."/>
            <person name="Sakano H."/>
            <person name="Salzberg S.L."/>
            <person name="Schwartz J.R."/>
            <person name="Shinn P."/>
            <person name="Southwick A.M."/>
            <person name="Sun H."/>
            <person name="Tallon L.J."/>
            <person name="Tambunga G."/>
            <person name="Toriumi M.J."/>
            <person name="Town C.D."/>
            <person name="Utterback T."/>
            <person name="Van Aken S."/>
            <person name="Vaysberg M."/>
            <person name="Vysotskaia V.S."/>
            <person name="Walker M."/>
            <person name="Wu D."/>
            <person name="Yu G."/>
            <person name="Fraser C.M."/>
            <person name="Venter J.C."/>
            <person name="Davis R.W."/>
        </authorList>
    </citation>
    <scope>NUCLEOTIDE SEQUENCE [LARGE SCALE GENOMIC DNA]</scope>
    <source>
        <strain>cv. Columbia</strain>
    </source>
</reference>
<reference key="2">
    <citation type="journal article" date="2017" name="Plant J.">
        <title>Araport11: a complete reannotation of the Arabidopsis thaliana reference genome.</title>
        <authorList>
            <person name="Cheng C.Y."/>
            <person name="Krishnakumar V."/>
            <person name="Chan A.P."/>
            <person name="Thibaud-Nissen F."/>
            <person name="Schobel S."/>
            <person name="Town C.D."/>
        </authorList>
    </citation>
    <scope>GENOME REANNOTATION</scope>
    <source>
        <strain>cv. Columbia</strain>
    </source>
</reference>
<reference key="3">
    <citation type="submission" date="2002-03" db="EMBL/GenBank/DDBJ databases">
        <title>Full-length cDNA from Arabidopsis thaliana.</title>
        <authorList>
            <person name="Brover V.V."/>
            <person name="Troukhan M.E."/>
            <person name="Alexandrov N.A."/>
            <person name="Lu Y.-P."/>
            <person name="Flavell R.B."/>
            <person name="Feldmann K.A."/>
        </authorList>
    </citation>
    <scope>NUCLEOTIDE SEQUENCE [LARGE SCALE MRNA] (ISOFORM 1)</scope>
</reference>
<reference key="4">
    <citation type="submission" date="2004-03" db="EMBL/GenBank/DDBJ databases">
        <title>Arabidopsis thaliana At1g16020 mRNA sequence.</title>
        <authorList>
            <person name="Wrobel R.L."/>
            <person name="Kimball T.L."/>
            <person name="Steffen E."/>
            <person name="Thao S."/>
            <person name="Aceti D.J."/>
            <person name="Blommel P.G."/>
            <person name="Newman C.S."/>
            <person name="Zhao Q."/>
            <person name="Fox B.G."/>
            <person name="Phillips G.N. Jr."/>
            <person name="Markley J.L."/>
        </authorList>
    </citation>
    <scope>NUCLEOTIDE SEQUENCE [LARGE SCALE MRNA] OF 2-515 (ISOFORM 2)</scope>
</reference>
<reference key="5">
    <citation type="journal article" date="2014" name="Plant Cell">
        <title>Activation of the Rab7 GTPase by the MON1-CCZ1 complex is essential for PVC-to-vacuole trafficking and plant growth in Arabidopsis.</title>
        <authorList>
            <person name="Cui Y."/>
            <person name="Zhao Q."/>
            <person name="Gao C."/>
            <person name="Ding Y."/>
            <person name="Zeng Y."/>
            <person name="Ueda T."/>
            <person name="Nakano A."/>
            <person name="Jiang L."/>
        </authorList>
    </citation>
    <scope>FUNCTION</scope>
    <scope>INTERACTION WITH MON1</scope>
    <scope>SUBCELLULAR LOCATION</scope>
</reference>